<comment type="catalytic activity">
    <reaction evidence="1">
        <text>(S)-4-amino-5-oxopentanoate = 5-aminolevulinate</text>
        <dbReference type="Rhea" id="RHEA:14265"/>
        <dbReference type="ChEBI" id="CHEBI:57501"/>
        <dbReference type="ChEBI" id="CHEBI:356416"/>
        <dbReference type="EC" id="5.4.3.8"/>
    </reaction>
</comment>
<comment type="cofactor">
    <cofactor evidence="1">
        <name>pyridoxal 5'-phosphate</name>
        <dbReference type="ChEBI" id="CHEBI:597326"/>
    </cofactor>
</comment>
<comment type="pathway">
    <text evidence="1">Porphyrin-containing compound metabolism; protoporphyrin-IX biosynthesis; 5-aminolevulinate from L-glutamyl-tRNA(Glu): step 2/2.</text>
</comment>
<comment type="subunit">
    <text evidence="1">Homodimer.</text>
</comment>
<comment type="subcellular location">
    <subcellularLocation>
        <location evidence="1">Cytoplasm</location>
    </subcellularLocation>
</comment>
<comment type="similarity">
    <text evidence="1">Belongs to the class-III pyridoxal-phosphate-dependent aminotransferase family. HemL subfamily.</text>
</comment>
<gene>
    <name evidence="1" type="primary">hemL</name>
    <name type="ordered locus">HRM2_20470</name>
</gene>
<name>GSA_DESAH</name>
<feature type="chain" id="PRO_0000382308" description="Glutamate-1-semialdehyde 2,1-aminomutase">
    <location>
        <begin position="1"/>
        <end position="428"/>
    </location>
</feature>
<feature type="modified residue" description="N6-(pyridoxal phosphate)lysine" evidence="1">
    <location>
        <position position="267"/>
    </location>
</feature>
<keyword id="KW-0963">Cytoplasm</keyword>
<keyword id="KW-0413">Isomerase</keyword>
<keyword id="KW-0627">Porphyrin biosynthesis</keyword>
<keyword id="KW-0663">Pyridoxal phosphate</keyword>
<keyword id="KW-1185">Reference proteome</keyword>
<proteinExistence type="inferred from homology"/>
<evidence type="ECO:0000255" key="1">
    <source>
        <dbReference type="HAMAP-Rule" id="MF_00375"/>
    </source>
</evidence>
<reference key="1">
    <citation type="journal article" date="2009" name="Environ. Microbiol.">
        <title>Genome sequence of Desulfobacterium autotrophicum HRM2, a marine sulfate reducer oxidizing organic carbon completely to carbon dioxide.</title>
        <authorList>
            <person name="Strittmatter A.W."/>
            <person name="Liesegang H."/>
            <person name="Rabus R."/>
            <person name="Decker I."/>
            <person name="Amann J."/>
            <person name="Andres S."/>
            <person name="Henne A."/>
            <person name="Fricke W.F."/>
            <person name="Martinez-Arias R."/>
            <person name="Bartels D."/>
            <person name="Goesmann A."/>
            <person name="Krause L."/>
            <person name="Puehler A."/>
            <person name="Klenk H.P."/>
            <person name="Richter M."/>
            <person name="Schuler M."/>
            <person name="Gloeckner F.O."/>
            <person name="Meyerdierks A."/>
            <person name="Gottschalk G."/>
            <person name="Amann R."/>
        </authorList>
    </citation>
    <scope>NUCLEOTIDE SEQUENCE [LARGE SCALE GENOMIC DNA]</scope>
    <source>
        <strain>ATCC 43914 / DSM 3382 / VKM B-1955 / HRM2</strain>
    </source>
</reference>
<accession>C0QCR9</accession>
<dbReference type="EC" id="5.4.3.8" evidence="1"/>
<dbReference type="EMBL" id="CP001087">
    <property type="protein sequence ID" value="ACN15146.1"/>
    <property type="molecule type" value="Genomic_DNA"/>
</dbReference>
<dbReference type="RefSeq" id="WP_015903924.1">
    <property type="nucleotide sequence ID" value="NC_012108.1"/>
</dbReference>
<dbReference type="SMR" id="C0QCR9"/>
<dbReference type="STRING" id="177437.HRM2_20470"/>
<dbReference type="KEGG" id="dat:HRM2_20470"/>
<dbReference type="eggNOG" id="COG0001">
    <property type="taxonomic scope" value="Bacteria"/>
</dbReference>
<dbReference type="HOGENOM" id="CLU_016922_1_5_7"/>
<dbReference type="OrthoDB" id="9801834at2"/>
<dbReference type="UniPathway" id="UPA00251">
    <property type="reaction ID" value="UER00317"/>
</dbReference>
<dbReference type="Proteomes" id="UP000000442">
    <property type="component" value="Chromosome"/>
</dbReference>
<dbReference type="GO" id="GO:0005737">
    <property type="term" value="C:cytoplasm"/>
    <property type="evidence" value="ECO:0007669"/>
    <property type="project" value="UniProtKB-SubCell"/>
</dbReference>
<dbReference type="GO" id="GO:0042286">
    <property type="term" value="F:glutamate-1-semialdehyde 2,1-aminomutase activity"/>
    <property type="evidence" value="ECO:0007669"/>
    <property type="project" value="UniProtKB-UniRule"/>
</dbReference>
<dbReference type="GO" id="GO:0030170">
    <property type="term" value="F:pyridoxal phosphate binding"/>
    <property type="evidence" value="ECO:0007669"/>
    <property type="project" value="InterPro"/>
</dbReference>
<dbReference type="GO" id="GO:0008483">
    <property type="term" value="F:transaminase activity"/>
    <property type="evidence" value="ECO:0007669"/>
    <property type="project" value="InterPro"/>
</dbReference>
<dbReference type="GO" id="GO:0006782">
    <property type="term" value="P:protoporphyrinogen IX biosynthetic process"/>
    <property type="evidence" value="ECO:0007669"/>
    <property type="project" value="UniProtKB-UniRule"/>
</dbReference>
<dbReference type="CDD" id="cd00610">
    <property type="entry name" value="OAT_like"/>
    <property type="match status" value="1"/>
</dbReference>
<dbReference type="FunFam" id="3.40.640.10:FF:000021">
    <property type="entry name" value="Glutamate-1-semialdehyde 2,1-aminomutase"/>
    <property type="match status" value="1"/>
</dbReference>
<dbReference type="Gene3D" id="3.90.1150.10">
    <property type="entry name" value="Aspartate Aminotransferase, domain 1"/>
    <property type="match status" value="1"/>
</dbReference>
<dbReference type="Gene3D" id="3.40.640.10">
    <property type="entry name" value="Type I PLP-dependent aspartate aminotransferase-like (Major domain)"/>
    <property type="match status" value="1"/>
</dbReference>
<dbReference type="HAMAP" id="MF_00375">
    <property type="entry name" value="HemL_aminotrans_3"/>
    <property type="match status" value="1"/>
</dbReference>
<dbReference type="InterPro" id="IPR004639">
    <property type="entry name" value="4pyrrol_synth_GluAld_NH2Trfase"/>
</dbReference>
<dbReference type="InterPro" id="IPR005814">
    <property type="entry name" value="Aminotrans_3"/>
</dbReference>
<dbReference type="InterPro" id="IPR049704">
    <property type="entry name" value="Aminotrans_3_PPA_site"/>
</dbReference>
<dbReference type="InterPro" id="IPR015424">
    <property type="entry name" value="PyrdxlP-dep_Trfase"/>
</dbReference>
<dbReference type="InterPro" id="IPR015421">
    <property type="entry name" value="PyrdxlP-dep_Trfase_major"/>
</dbReference>
<dbReference type="InterPro" id="IPR015422">
    <property type="entry name" value="PyrdxlP-dep_Trfase_small"/>
</dbReference>
<dbReference type="NCBIfam" id="TIGR00713">
    <property type="entry name" value="hemL"/>
    <property type="match status" value="1"/>
</dbReference>
<dbReference type="NCBIfam" id="NF000818">
    <property type="entry name" value="PRK00062.1"/>
    <property type="match status" value="1"/>
</dbReference>
<dbReference type="PANTHER" id="PTHR43713">
    <property type="entry name" value="GLUTAMATE-1-SEMIALDEHYDE 2,1-AMINOMUTASE"/>
    <property type="match status" value="1"/>
</dbReference>
<dbReference type="PANTHER" id="PTHR43713:SF3">
    <property type="entry name" value="GLUTAMATE-1-SEMIALDEHYDE 2,1-AMINOMUTASE 1, CHLOROPLASTIC-RELATED"/>
    <property type="match status" value="1"/>
</dbReference>
<dbReference type="Pfam" id="PF00202">
    <property type="entry name" value="Aminotran_3"/>
    <property type="match status" value="1"/>
</dbReference>
<dbReference type="SUPFAM" id="SSF53383">
    <property type="entry name" value="PLP-dependent transferases"/>
    <property type="match status" value="1"/>
</dbReference>
<dbReference type="PROSITE" id="PS00600">
    <property type="entry name" value="AA_TRANSFER_CLASS_3"/>
    <property type="match status" value="1"/>
</dbReference>
<sequence>METTRSEALFKEAAKFIPGGVNSPVRACGSVGGSPLFIQKAEGSKIIDADGNVYIDYVGSWGPMILGHRHPDVVKALIEALASGTSFGAPTALETRLSQLVVEAVPSVEKVRMVNSGTEATMSAVRLARGYTGRDIIIKFDGGYHGHADTLLVAAGSGVATLNIPGSPGIPESVSAHTLSITYNDGEAVKRVMAEKGDRVAAIIVEPVAGNMGMVPPVKGFHETLRTLCTKHGALLIFDEVMTGFRVAKGSGQGLFGITPDLTCFGKIIGGGLPVGAYGGRREIMDQIAPAGPVYQAGTLSGNPLAMAAGIATLEALKKTGFYESLDAKTERLVTGLRTAAEKAGIDFTASHVGSMAGMFFTRATVTNFDEAKTSDLVNFSKFYTGMRDRGIYLAPSQFEALFVSAAHTNDEIDATIAAAADVMAGLV</sequence>
<protein>
    <recommendedName>
        <fullName evidence="1">Glutamate-1-semialdehyde 2,1-aminomutase</fullName>
        <shortName evidence="1">GSA</shortName>
        <ecNumber evidence="1">5.4.3.8</ecNumber>
    </recommendedName>
    <alternativeName>
        <fullName evidence="1">Glutamate-1-semialdehyde aminotransferase</fullName>
        <shortName evidence="1">GSA-AT</shortName>
    </alternativeName>
</protein>
<organism>
    <name type="scientific">Desulforapulum autotrophicum (strain ATCC 43914 / DSM 3382 / VKM B-1955 / HRM2)</name>
    <name type="common">Desulfobacterium autotrophicum</name>
    <dbReference type="NCBI Taxonomy" id="177437"/>
    <lineage>
        <taxon>Bacteria</taxon>
        <taxon>Pseudomonadati</taxon>
        <taxon>Thermodesulfobacteriota</taxon>
        <taxon>Desulfobacteria</taxon>
        <taxon>Desulfobacterales</taxon>
        <taxon>Desulfobacteraceae</taxon>
        <taxon>Desulforapulum</taxon>
    </lineage>
</organism>